<dbReference type="EC" id="6.1.1.14" evidence="1"/>
<dbReference type="EMBL" id="CP000266">
    <property type="protein sequence ID" value="ABF05986.1"/>
    <property type="molecule type" value="Genomic_DNA"/>
</dbReference>
<dbReference type="RefSeq" id="WP_001168544.1">
    <property type="nucleotide sequence ID" value="NC_008258.1"/>
</dbReference>
<dbReference type="SMR" id="Q0SY79"/>
<dbReference type="GeneID" id="93778290"/>
<dbReference type="KEGG" id="sfv:SFV_3981"/>
<dbReference type="HOGENOM" id="CLU_057066_1_0_6"/>
<dbReference type="Proteomes" id="UP000000659">
    <property type="component" value="Chromosome"/>
</dbReference>
<dbReference type="GO" id="GO:0005829">
    <property type="term" value="C:cytosol"/>
    <property type="evidence" value="ECO:0007669"/>
    <property type="project" value="TreeGrafter"/>
</dbReference>
<dbReference type="GO" id="GO:0005524">
    <property type="term" value="F:ATP binding"/>
    <property type="evidence" value="ECO:0007669"/>
    <property type="project" value="UniProtKB-UniRule"/>
</dbReference>
<dbReference type="GO" id="GO:0004820">
    <property type="term" value="F:glycine-tRNA ligase activity"/>
    <property type="evidence" value="ECO:0007669"/>
    <property type="project" value="UniProtKB-UniRule"/>
</dbReference>
<dbReference type="GO" id="GO:0006426">
    <property type="term" value="P:glycyl-tRNA aminoacylation"/>
    <property type="evidence" value="ECO:0007669"/>
    <property type="project" value="UniProtKB-UniRule"/>
</dbReference>
<dbReference type="CDD" id="cd00733">
    <property type="entry name" value="GlyRS_alpha_core"/>
    <property type="match status" value="1"/>
</dbReference>
<dbReference type="FunFam" id="1.20.58.180:FF:000001">
    <property type="entry name" value="Glycine--tRNA ligase alpha subunit"/>
    <property type="match status" value="1"/>
</dbReference>
<dbReference type="FunFam" id="3.30.930.10:FF:000006">
    <property type="entry name" value="Glycine--tRNA ligase alpha subunit"/>
    <property type="match status" value="1"/>
</dbReference>
<dbReference type="Gene3D" id="3.30.930.10">
    <property type="entry name" value="Bira Bifunctional Protein, Domain 2"/>
    <property type="match status" value="1"/>
</dbReference>
<dbReference type="Gene3D" id="1.20.58.180">
    <property type="entry name" value="Class II aaRS and biotin synthetases, domain 2"/>
    <property type="match status" value="1"/>
</dbReference>
<dbReference type="HAMAP" id="MF_00254">
    <property type="entry name" value="Gly_tRNA_synth_alpha"/>
    <property type="match status" value="1"/>
</dbReference>
<dbReference type="InterPro" id="IPR045864">
    <property type="entry name" value="aa-tRNA-synth_II/BPL/LPL"/>
</dbReference>
<dbReference type="InterPro" id="IPR006194">
    <property type="entry name" value="Gly-tRNA-synth_heterodimer"/>
</dbReference>
<dbReference type="InterPro" id="IPR002310">
    <property type="entry name" value="Gly-tRNA_ligase_asu"/>
</dbReference>
<dbReference type="NCBIfam" id="TIGR00388">
    <property type="entry name" value="glyQ"/>
    <property type="match status" value="1"/>
</dbReference>
<dbReference type="NCBIfam" id="NF006827">
    <property type="entry name" value="PRK09348.1"/>
    <property type="match status" value="1"/>
</dbReference>
<dbReference type="PANTHER" id="PTHR30075:SF2">
    <property type="entry name" value="GLYCINE--TRNA LIGASE, CHLOROPLASTIC_MITOCHONDRIAL 2"/>
    <property type="match status" value="1"/>
</dbReference>
<dbReference type="PANTHER" id="PTHR30075">
    <property type="entry name" value="GLYCYL-TRNA SYNTHETASE"/>
    <property type="match status" value="1"/>
</dbReference>
<dbReference type="Pfam" id="PF02091">
    <property type="entry name" value="tRNA-synt_2e"/>
    <property type="match status" value="1"/>
</dbReference>
<dbReference type="PRINTS" id="PR01044">
    <property type="entry name" value="TRNASYNTHGA"/>
</dbReference>
<dbReference type="SUPFAM" id="SSF55681">
    <property type="entry name" value="Class II aaRS and biotin synthetases"/>
    <property type="match status" value="1"/>
</dbReference>
<dbReference type="PROSITE" id="PS50861">
    <property type="entry name" value="AA_TRNA_LIGASE_II_GLYAB"/>
    <property type="match status" value="1"/>
</dbReference>
<keyword id="KW-0030">Aminoacyl-tRNA synthetase</keyword>
<keyword id="KW-0067">ATP-binding</keyword>
<keyword id="KW-0963">Cytoplasm</keyword>
<keyword id="KW-0436">Ligase</keyword>
<keyword id="KW-0547">Nucleotide-binding</keyword>
<keyword id="KW-0648">Protein biosynthesis</keyword>
<gene>
    <name evidence="1" type="primary">glyQ</name>
    <name type="ordered locus">SFV_3981</name>
</gene>
<reference key="1">
    <citation type="journal article" date="2006" name="BMC Genomics">
        <title>Complete genome sequence of Shigella flexneri 5b and comparison with Shigella flexneri 2a.</title>
        <authorList>
            <person name="Nie H."/>
            <person name="Yang F."/>
            <person name="Zhang X."/>
            <person name="Yang J."/>
            <person name="Chen L."/>
            <person name="Wang J."/>
            <person name="Xiong Z."/>
            <person name="Peng J."/>
            <person name="Sun L."/>
            <person name="Dong J."/>
            <person name="Xue Y."/>
            <person name="Xu X."/>
            <person name="Chen S."/>
            <person name="Yao Z."/>
            <person name="Shen Y."/>
            <person name="Jin Q."/>
        </authorList>
    </citation>
    <scope>NUCLEOTIDE SEQUENCE [LARGE SCALE GENOMIC DNA]</scope>
    <source>
        <strain>8401</strain>
    </source>
</reference>
<comment type="catalytic activity">
    <reaction evidence="1">
        <text>tRNA(Gly) + glycine + ATP = glycyl-tRNA(Gly) + AMP + diphosphate</text>
        <dbReference type="Rhea" id="RHEA:16013"/>
        <dbReference type="Rhea" id="RHEA-COMP:9664"/>
        <dbReference type="Rhea" id="RHEA-COMP:9683"/>
        <dbReference type="ChEBI" id="CHEBI:30616"/>
        <dbReference type="ChEBI" id="CHEBI:33019"/>
        <dbReference type="ChEBI" id="CHEBI:57305"/>
        <dbReference type="ChEBI" id="CHEBI:78442"/>
        <dbReference type="ChEBI" id="CHEBI:78522"/>
        <dbReference type="ChEBI" id="CHEBI:456215"/>
        <dbReference type="EC" id="6.1.1.14"/>
    </reaction>
</comment>
<comment type="subunit">
    <text evidence="1">Tetramer of two alpha and two beta subunits.</text>
</comment>
<comment type="subcellular location">
    <subcellularLocation>
        <location evidence="1">Cytoplasm</location>
    </subcellularLocation>
</comment>
<comment type="similarity">
    <text evidence="1">Belongs to the class-II aminoacyl-tRNA synthetase family.</text>
</comment>
<organism>
    <name type="scientific">Shigella flexneri serotype 5b (strain 8401)</name>
    <dbReference type="NCBI Taxonomy" id="373384"/>
    <lineage>
        <taxon>Bacteria</taxon>
        <taxon>Pseudomonadati</taxon>
        <taxon>Pseudomonadota</taxon>
        <taxon>Gammaproteobacteria</taxon>
        <taxon>Enterobacterales</taxon>
        <taxon>Enterobacteriaceae</taxon>
        <taxon>Shigella</taxon>
    </lineage>
</organism>
<evidence type="ECO:0000255" key="1">
    <source>
        <dbReference type="HAMAP-Rule" id="MF_00254"/>
    </source>
</evidence>
<name>SYGA_SHIF8</name>
<protein>
    <recommendedName>
        <fullName evidence="1">Glycine--tRNA ligase alpha subunit</fullName>
        <ecNumber evidence="1">6.1.1.14</ecNumber>
    </recommendedName>
    <alternativeName>
        <fullName evidence="1">Glycyl-tRNA synthetase alpha subunit</fullName>
        <shortName evidence="1">GlyRS</shortName>
    </alternativeName>
</protein>
<sequence length="303" mass="34716">MQKFDTRTFQGLILTLQDYWARQGCTIVQPLDMEVGAGTSHPMTCLRALGPEPMAAAYVQPSRRPTDGRYGENPNRLQHYYQFQVVIKPSPDNIQELYLGSLKELGMDPTIHDIRFVEDNWENPTLGAWGLGWEVWLNGMEVTQFTYFQQVGGLECKPVTGEITYGLERLAMYIQGVDSVYDLVWSDGPLGKTTYGDVFHQNEVEQSTYNFEYADVDFLFTCFEQYEKEAQQLLALENPLPLPAYERILKAAHSFNLLDARKAISVTERQRYILRIRTLTKAVAEAYYASREALGFPMCNKDK</sequence>
<proteinExistence type="inferred from homology"/>
<feature type="chain" id="PRO_1000047495" description="Glycine--tRNA ligase alpha subunit">
    <location>
        <begin position="1"/>
        <end position="303"/>
    </location>
</feature>
<accession>Q0SY79</accession>